<name>RHLB_HAMD5</name>
<protein>
    <recommendedName>
        <fullName evidence="1">ATP-dependent RNA helicase RhlB</fullName>
        <ecNumber evidence="1">3.6.4.13</ecNumber>
    </recommendedName>
</protein>
<gene>
    <name evidence="1" type="primary">rhlB</name>
    <name type="ordered locus">HDEF_0090</name>
</gene>
<comment type="function">
    <text evidence="1">DEAD-box RNA helicase involved in RNA degradation. Has RNA-dependent ATPase activity and unwinds double-stranded RNA.</text>
</comment>
<comment type="catalytic activity">
    <reaction evidence="1">
        <text>ATP + H2O = ADP + phosphate + H(+)</text>
        <dbReference type="Rhea" id="RHEA:13065"/>
        <dbReference type="ChEBI" id="CHEBI:15377"/>
        <dbReference type="ChEBI" id="CHEBI:15378"/>
        <dbReference type="ChEBI" id="CHEBI:30616"/>
        <dbReference type="ChEBI" id="CHEBI:43474"/>
        <dbReference type="ChEBI" id="CHEBI:456216"/>
        <dbReference type="EC" id="3.6.4.13"/>
    </reaction>
</comment>
<comment type="subunit">
    <text evidence="1">Component of the RNA degradosome, which is a multiprotein complex involved in RNA processing and mRNA degradation.</text>
</comment>
<comment type="subcellular location">
    <subcellularLocation>
        <location evidence="1">Cytoplasm</location>
    </subcellularLocation>
</comment>
<comment type="similarity">
    <text evidence="1">Belongs to the DEAD box helicase family. RhlB subfamily.</text>
</comment>
<accession>C4K8M8</accession>
<feature type="chain" id="PRO_1000212476" description="ATP-dependent RNA helicase RhlB">
    <location>
        <begin position="1"/>
        <end position="422"/>
    </location>
</feature>
<feature type="domain" description="Helicase ATP-binding" evidence="1">
    <location>
        <begin position="40"/>
        <end position="219"/>
    </location>
</feature>
<feature type="domain" description="Helicase C-terminal" evidence="1">
    <location>
        <begin position="245"/>
        <end position="390"/>
    </location>
</feature>
<feature type="region of interest" description="Disordered" evidence="2">
    <location>
        <begin position="394"/>
        <end position="422"/>
    </location>
</feature>
<feature type="short sequence motif" description="Q motif">
    <location>
        <begin position="9"/>
        <end position="37"/>
    </location>
</feature>
<feature type="short sequence motif" description="DEAD box">
    <location>
        <begin position="165"/>
        <end position="168"/>
    </location>
</feature>
<feature type="compositionally biased region" description="Basic residues" evidence="2">
    <location>
        <begin position="398"/>
        <end position="407"/>
    </location>
</feature>
<feature type="binding site" evidence="1">
    <location>
        <begin position="53"/>
        <end position="60"/>
    </location>
    <ligand>
        <name>ATP</name>
        <dbReference type="ChEBI" id="CHEBI:30616"/>
    </ligand>
</feature>
<dbReference type="EC" id="3.6.4.13" evidence="1"/>
<dbReference type="EMBL" id="CP001277">
    <property type="protein sequence ID" value="ACQ66865.1"/>
    <property type="molecule type" value="Genomic_DNA"/>
</dbReference>
<dbReference type="RefSeq" id="WP_012737830.1">
    <property type="nucleotide sequence ID" value="NC_012751.1"/>
</dbReference>
<dbReference type="SMR" id="C4K8M8"/>
<dbReference type="STRING" id="572265.HDEF_0090"/>
<dbReference type="GeneID" id="66260031"/>
<dbReference type="KEGG" id="hde:HDEF_0090"/>
<dbReference type="eggNOG" id="COG0513">
    <property type="taxonomic scope" value="Bacteria"/>
</dbReference>
<dbReference type="HOGENOM" id="CLU_003041_1_3_6"/>
<dbReference type="Proteomes" id="UP000002334">
    <property type="component" value="Chromosome"/>
</dbReference>
<dbReference type="GO" id="GO:0005829">
    <property type="term" value="C:cytosol"/>
    <property type="evidence" value="ECO:0007669"/>
    <property type="project" value="TreeGrafter"/>
</dbReference>
<dbReference type="GO" id="GO:0005524">
    <property type="term" value="F:ATP binding"/>
    <property type="evidence" value="ECO:0007669"/>
    <property type="project" value="UniProtKB-UniRule"/>
</dbReference>
<dbReference type="GO" id="GO:0016887">
    <property type="term" value="F:ATP hydrolysis activity"/>
    <property type="evidence" value="ECO:0007669"/>
    <property type="project" value="RHEA"/>
</dbReference>
<dbReference type="GO" id="GO:0003723">
    <property type="term" value="F:RNA binding"/>
    <property type="evidence" value="ECO:0007669"/>
    <property type="project" value="UniProtKB-UniRule"/>
</dbReference>
<dbReference type="GO" id="GO:0003724">
    <property type="term" value="F:RNA helicase activity"/>
    <property type="evidence" value="ECO:0007669"/>
    <property type="project" value="UniProtKB-UniRule"/>
</dbReference>
<dbReference type="GO" id="GO:0006401">
    <property type="term" value="P:RNA catabolic process"/>
    <property type="evidence" value="ECO:0007669"/>
    <property type="project" value="UniProtKB-UniRule"/>
</dbReference>
<dbReference type="CDD" id="cd00268">
    <property type="entry name" value="DEADc"/>
    <property type="match status" value="1"/>
</dbReference>
<dbReference type="CDD" id="cd18787">
    <property type="entry name" value="SF2_C_DEAD"/>
    <property type="match status" value="1"/>
</dbReference>
<dbReference type="FunFam" id="3.40.50.300:FF:000312">
    <property type="entry name" value="ATP-dependent RNA helicase RhlB"/>
    <property type="match status" value="1"/>
</dbReference>
<dbReference type="Gene3D" id="3.40.50.300">
    <property type="entry name" value="P-loop containing nucleotide triphosphate hydrolases"/>
    <property type="match status" value="2"/>
</dbReference>
<dbReference type="HAMAP" id="MF_00661">
    <property type="entry name" value="DEAD_helicase_RhlB"/>
    <property type="match status" value="1"/>
</dbReference>
<dbReference type="InterPro" id="IPR011545">
    <property type="entry name" value="DEAD/DEAH_box_helicase_dom"/>
</dbReference>
<dbReference type="InterPro" id="IPR050079">
    <property type="entry name" value="DEAD_box_RNA_helicase"/>
</dbReference>
<dbReference type="InterPro" id="IPR014001">
    <property type="entry name" value="Helicase_ATP-bd"/>
</dbReference>
<dbReference type="InterPro" id="IPR001650">
    <property type="entry name" value="Helicase_C-like"/>
</dbReference>
<dbReference type="InterPro" id="IPR027417">
    <property type="entry name" value="P-loop_NTPase"/>
</dbReference>
<dbReference type="InterPro" id="IPR000629">
    <property type="entry name" value="RNA-helicase_DEAD-box_CS"/>
</dbReference>
<dbReference type="InterPro" id="IPR023554">
    <property type="entry name" value="RNA_helicase_ATP-dep_RhlB"/>
</dbReference>
<dbReference type="InterPro" id="IPR014014">
    <property type="entry name" value="RNA_helicase_DEAD_Q_motif"/>
</dbReference>
<dbReference type="NCBIfam" id="NF003419">
    <property type="entry name" value="PRK04837.1"/>
    <property type="match status" value="1"/>
</dbReference>
<dbReference type="PANTHER" id="PTHR47959:SF10">
    <property type="entry name" value="ATP-DEPENDENT RNA HELICASE RHLB"/>
    <property type="match status" value="1"/>
</dbReference>
<dbReference type="PANTHER" id="PTHR47959">
    <property type="entry name" value="ATP-DEPENDENT RNA HELICASE RHLE-RELATED"/>
    <property type="match status" value="1"/>
</dbReference>
<dbReference type="Pfam" id="PF00270">
    <property type="entry name" value="DEAD"/>
    <property type="match status" value="1"/>
</dbReference>
<dbReference type="Pfam" id="PF00271">
    <property type="entry name" value="Helicase_C"/>
    <property type="match status" value="1"/>
</dbReference>
<dbReference type="SMART" id="SM00487">
    <property type="entry name" value="DEXDc"/>
    <property type="match status" value="1"/>
</dbReference>
<dbReference type="SMART" id="SM00490">
    <property type="entry name" value="HELICc"/>
    <property type="match status" value="1"/>
</dbReference>
<dbReference type="SUPFAM" id="SSF52540">
    <property type="entry name" value="P-loop containing nucleoside triphosphate hydrolases"/>
    <property type="match status" value="1"/>
</dbReference>
<dbReference type="PROSITE" id="PS00039">
    <property type="entry name" value="DEAD_ATP_HELICASE"/>
    <property type="match status" value="1"/>
</dbReference>
<dbReference type="PROSITE" id="PS51192">
    <property type="entry name" value="HELICASE_ATP_BIND_1"/>
    <property type="match status" value="1"/>
</dbReference>
<dbReference type="PROSITE" id="PS51194">
    <property type="entry name" value="HELICASE_CTER"/>
    <property type="match status" value="1"/>
</dbReference>
<dbReference type="PROSITE" id="PS51195">
    <property type="entry name" value="Q_MOTIF"/>
    <property type="match status" value="1"/>
</dbReference>
<organism>
    <name type="scientific">Hamiltonella defensa subsp. Acyrthosiphon pisum (strain 5AT)</name>
    <dbReference type="NCBI Taxonomy" id="572265"/>
    <lineage>
        <taxon>Bacteria</taxon>
        <taxon>Pseudomonadati</taxon>
        <taxon>Pseudomonadota</taxon>
        <taxon>Gammaproteobacteria</taxon>
        <taxon>Enterobacterales</taxon>
        <taxon>Enterobacteriaceae</taxon>
        <taxon>aphid secondary symbionts</taxon>
        <taxon>Candidatus Hamiltonella</taxon>
    </lineage>
</organism>
<evidence type="ECO:0000255" key="1">
    <source>
        <dbReference type="HAMAP-Rule" id="MF_00661"/>
    </source>
</evidence>
<evidence type="ECO:0000256" key="2">
    <source>
        <dbReference type="SAM" id="MobiDB-lite"/>
    </source>
</evidence>
<reference key="1">
    <citation type="journal article" date="2009" name="Proc. Natl. Acad. Sci. U.S.A.">
        <title>Hamiltonella defensa, genome evolution of protective bacterial endosymbiont from pathogenic ancestors.</title>
        <authorList>
            <person name="Degnan P.H."/>
            <person name="Yu Y."/>
            <person name="Sisneros N."/>
            <person name="Wing R.A."/>
            <person name="Moran N.A."/>
        </authorList>
    </citation>
    <scope>NUCLEOTIDE SEQUENCE [LARGE SCALE GENOMIC DNA]</scope>
    <source>
        <strain>5AT</strain>
    </source>
</reference>
<proteinExistence type="inferred from homology"/>
<keyword id="KW-0067">ATP-binding</keyword>
<keyword id="KW-0963">Cytoplasm</keyword>
<keyword id="KW-0347">Helicase</keyword>
<keyword id="KW-0378">Hydrolase</keyword>
<keyword id="KW-0547">Nucleotide-binding</keyword>
<keyword id="KW-0694">RNA-binding</keyword>
<sequence>MNKTHLTDQKFSDFALHPLVIKAIENQGFYHCTPIQALSFPITLAGRDVAAQAQTGTGKTLAFLASVFNYLLTNAADETRQCEQPRALIMVPTRELAIQIYTDAETLSQFTSLKMGLAYGGDGYDKQLKILESGVDILIGTPGRIIDYAKQNFIHLNALQVIVLDEADRMYDLGFIKDIRWLFRRMPPAEKRLNMLFSATLSYRVRELSFEQMNHPEYIEVEPLQKIGSQIQEELFYPSNEDKMRLLQTLIEEEWPDRCIIFANTKQRCEDIWGHLVADGHRVGLLTGDVAQRKRIQILDDFSKGYLDILVATDVAARGLHIPKVTHVFNYDLPENVEDYIHRIGRTGRAGEKGYSISLACEAFASHLSTIEACTGHRIPTSEYNKEALLTDLPQPKRLQRHHRHYAGSRNQGASRKPRSPQ</sequence>